<organism>
    <name type="scientific">Arabidopsis thaliana</name>
    <name type="common">Mouse-ear cress</name>
    <dbReference type="NCBI Taxonomy" id="3702"/>
    <lineage>
        <taxon>Eukaryota</taxon>
        <taxon>Viridiplantae</taxon>
        <taxon>Streptophyta</taxon>
        <taxon>Embryophyta</taxon>
        <taxon>Tracheophyta</taxon>
        <taxon>Spermatophyta</taxon>
        <taxon>Magnoliopsida</taxon>
        <taxon>eudicotyledons</taxon>
        <taxon>Gunneridae</taxon>
        <taxon>Pentapetalae</taxon>
        <taxon>rosids</taxon>
        <taxon>malvids</taxon>
        <taxon>Brassicales</taxon>
        <taxon>Brassicaceae</taxon>
        <taxon>Camelineae</taxon>
        <taxon>Arabidopsis</taxon>
    </lineage>
</organism>
<evidence type="ECO:0000250" key="1">
    <source>
        <dbReference type="UniProtKB" id="Q9H2C2"/>
    </source>
</evidence>
<evidence type="ECO:0000255" key="2"/>
<evidence type="ECO:0000255" key="3">
    <source>
        <dbReference type="PROSITE-ProRule" id="PRU00498"/>
    </source>
</evidence>
<evidence type="ECO:0000269" key="4">
    <source>
    </source>
</evidence>
<evidence type="ECO:0000303" key="5">
    <source>
    </source>
</evidence>
<evidence type="ECO:0000305" key="6"/>
<evidence type="ECO:0000312" key="7">
    <source>
        <dbReference type="Araport" id="AT4G01510"/>
    </source>
</evidence>
<evidence type="ECO:0000312" key="8">
    <source>
        <dbReference type="EMBL" id="CAB77721.1"/>
    </source>
</evidence>
<name>ARV2_ARATH</name>
<feature type="chain" id="PRO_0000446892" description="Protein ARV 2">
    <location>
        <begin position="1"/>
        <end position="228"/>
    </location>
</feature>
<feature type="transmembrane region" description="Helical" evidence="2">
    <location>
        <begin position="37"/>
        <end position="57"/>
    </location>
</feature>
<feature type="transmembrane region" description="Helical" evidence="2">
    <location>
        <begin position="80"/>
        <end position="100"/>
    </location>
</feature>
<feature type="transmembrane region" description="Helical" evidence="2">
    <location>
        <begin position="123"/>
        <end position="143"/>
    </location>
</feature>
<feature type="transmembrane region" description="Helical" evidence="2">
    <location>
        <begin position="150"/>
        <end position="170"/>
    </location>
</feature>
<feature type="transmembrane region" description="Helical" evidence="2">
    <location>
        <begin position="176"/>
        <end position="196"/>
    </location>
</feature>
<feature type="glycosylation site" description="N-linked (GlcNAc...) asparagine" evidence="3">
    <location>
        <position position="107"/>
    </location>
</feature>
<feature type="mutagenesis site" description="Impaired ability to complement arv1-disrupted yeast." evidence="4">
    <location>
        <begin position="1"/>
        <end position="68"/>
    </location>
</feature>
<feature type="mutagenesis site" description="Impaired ability to complement arv1-disrupted yeast." evidence="4">
    <location>
        <begin position="1"/>
        <end position="56"/>
    </location>
</feature>
<feature type="mutagenesis site" description="Impaired ability to complement arv1-disrupted yeast." evidence="4">
    <location>
        <begin position="1"/>
        <end position="46"/>
    </location>
</feature>
<feature type="mutagenesis site" description="Normal ability to complement arv1-disrupted yeast." evidence="4">
    <location>
        <begin position="1"/>
        <end position="35"/>
    </location>
</feature>
<dbReference type="EMBL" id="AY758071">
    <property type="protein sequence ID" value="AAV92716.1"/>
    <property type="molecule type" value="mRNA"/>
</dbReference>
<dbReference type="EMBL" id="AL161492">
    <property type="protein sequence ID" value="CAB77721.1"/>
    <property type="status" value="ALT_INIT"/>
    <property type="molecule type" value="Genomic_DNA"/>
</dbReference>
<dbReference type="EMBL" id="CP002687">
    <property type="protein sequence ID" value="AEE82034.1"/>
    <property type="molecule type" value="Genomic_DNA"/>
</dbReference>
<dbReference type="PIR" id="F85019">
    <property type="entry name" value="F85019"/>
</dbReference>
<dbReference type="RefSeq" id="NP_192060.2">
    <property type="nucleotide sequence ID" value="NM_116381.4"/>
</dbReference>
<dbReference type="FunCoup" id="Q5MK23">
    <property type="interactions" value="3155"/>
</dbReference>
<dbReference type="STRING" id="3702.Q5MK23"/>
<dbReference type="GlyCosmos" id="Q5MK23">
    <property type="glycosylation" value="1 site, No reported glycans"/>
</dbReference>
<dbReference type="GlyGen" id="Q5MK23">
    <property type="glycosylation" value="1 site"/>
</dbReference>
<dbReference type="PaxDb" id="3702-AT4G01510.1"/>
<dbReference type="EnsemblPlants" id="AT4G01510.1">
    <property type="protein sequence ID" value="AT4G01510.1"/>
    <property type="gene ID" value="AT4G01510"/>
</dbReference>
<dbReference type="GeneID" id="826763"/>
<dbReference type="Gramene" id="AT4G01510.1">
    <property type="protein sequence ID" value="AT4G01510.1"/>
    <property type="gene ID" value="AT4G01510"/>
</dbReference>
<dbReference type="KEGG" id="ath:AT4G01510"/>
<dbReference type="Araport" id="AT4G01510"/>
<dbReference type="TAIR" id="AT4G01510">
    <property type="gene designation" value="ARV2"/>
</dbReference>
<dbReference type="eggNOG" id="KOG3134">
    <property type="taxonomic scope" value="Eukaryota"/>
</dbReference>
<dbReference type="HOGENOM" id="CLU_057366_1_0_1"/>
<dbReference type="InParanoid" id="Q5MK23"/>
<dbReference type="OMA" id="MLDMNVK"/>
<dbReference type="PRO" id="PR:Q5MK23"/>
<dbReference type="Proteomes" id="UP000006548">
    <property type="component" value="Chromosome 4"/>
</dbReference>
<dbReference type="ExpressionAtlas" id="Q5MK23">
    <property type="expression patterns" value="baseline and differential"/>
</dbReference>
<dbReference type="GO" id="GO:0005783">
    <property type="term" value="C:endoplasmic reticulum"/>
    <property type="evidence" value="ECO:0000314"/>
    <property type="project" value="TAIR"/>
</dbReference>
<dbReference type="GO" id="GO:0005789">
    <property type="term" value="C:endoplasmic reticulum membrane"/>
    <property type="evidence" value="ECO:0007669"/>
    <property type="project" value="UniProtKB-SubCell"/>
</dbReference>
<dbReference type="GO" id="GO:0032366">
    <property type="term" value="P:intracellular sterol transport"/>
    <property type="evidence" value="ECO:0007669"/>
    <property type="project" value="InterPro"/>
</dbReference>
<dbReference type="GO" id="GO:0006665">
    <property type="term" value="P:sphingolipid metabolic process"/>
    <property type="evidence" value="ECO:0000315"/>
    <property type="project" value="TAIR"/>
</dbReference>
<dbReference type="GO" id="GO:0016125">
    <property type="term" value="P:sterol metabolic process"/>
    <property type="evidence" value="ECO:0000315"/>
    <property type="project" value="TAIR"/>
</dbReference>
<dbReference type="InterPro" id="IPR007290">
    <property type="entry name" value="Arv1"/>
</dbReference>
<dbReference type="PANTHER" id="PTHR14467">
    <property type="entry name" value="ARV1"/>
    <property type="match status" value="1"/>
</dbReference>
<dbReference type="PANTHER" id="PTHR14467:SF1">
    <property type="entry name" value="PROTEIN ARV 2"/>
    <property type="match status" value="1"/>
</dbReference>
<dbReference type="Pfam" id="PF04161">
    <property type="entry name" value="Arv1"/>
    <property type="match status" value="1"/>
</dbReference>
<comment type="function">
    <text evidence="4">Mediator of sterol homeostasis involved in sterol uptake, trafficking and distribution into membranes. Also regulates the sphingolipid metabolism.</text>
</comment>
<comment type="subcellular location">
    <subcellularLocation>
        <location evidence="4">Endoplasmic reticulum membrane</location>
        <topology evidence="1">Multi-pass membrane protein</topology>
    </subcellularLocation>
</comment>
<comment type="tissue specificity">
    <text evidence="4">Restricted to tissues in which cells are actively dividing or expanding. Mostly expressed in roots and flowers, and, to a lower extent, in stems and leaves.</text>
</comment>
<comment type="developmental stage">
    <text evidence="4">In floral tissues, expressed in pollen grains and fertilized ovules until they develop into seeds, and, at low levels, in the styles. Observed in germinating seedlings, and later confined to shoot and root apical meristems.</text>
</comment>
<comment type="similarity">
    <text evidence="6">Belongs to the ARV1 family.</text>
</comment>
<comment type="sequence caution" evidence="6">
    <conflict type="erroneous initiation">
        <sequence resource="EMBL-CDS" id="CAB77721"/>
    </conflict>
    <text>Extended N-terminus.</text>
</comment>
<sequence>MAREKKTCVECGHKVKSLFIQYSPGNFRLMKCENCEEVADEYVECELLIIFIDLILHKTKAYRHLLYNVVNQESANVQHLLWKLVLAYLLLDTYRSLLLRRTNDGSNVSMSFLFESLEVLVNVLSANFAFVFSFAFAAKLMLVMPRGKEILLTILISSYVKIFLFAMPVWEFPVSVIFIVDMLVLTSNAVALKVMTESATSRCLAVCFIAHSIRFLVDQISGHLGSVM</sequence>
<gene>
    <name evidence="5" type="primary">ARV2</name>
    <name evidence="7" type="ordered locus">At4g01510</name>
    <name evidence="8" type="ORF">F11O4.16</name>
</gene>
<proteinExistence type="evidence at protein level"/>
<keyword id="KW-0256">Endoplasmic reticulum</keyword>
<keyword id="KW-0325">Glycoprotein</keyword>
<keyword id="KW-0443">Lipid metabolism</keyword>
<keyword id="KW-0445">Lipid transport</keyword>
<keyword id="KW-0472">Membrane</keyword>
<keyword id="KW-1185">Reference proteome</keyword>
<keyword id="KW-0746">Sphingolipid metabolism</keyword>
<keyword id="KW-0812">Transmembrane</keyword>
<keyword id="KW-1133">Transmembrane helix</keyword>
<keyword id="KW-0813">Transport</keyword>
<accession>Q5MK23</accession>
<accession>Q9M127</accession>
<reference key="1">
    <citation type="journal article" date="2006" name="Biochim. Biophys. Acta">
        <title>Arabidopsis thaliana expresses two functional isoforms of Arvp, a protein involved in the regulation of cellular lipid homeostasis.</title>
        <authorList>
            <person name="Fores O."/>
            <person name="Arro M."/>
            <person name="Pahissa A."/>
            <person name="Ferrero S."/>
            <person name="Germann M."/>
            <person name="Stukey J."/>
            <person name="McDonough V."/>
            <person name="Nickels J.T. Jr."/>
            <person name="Campos N."/>
            <person name="Ferrer A."/>
        </authorList>
    </citation>
    <scope>NUCLEOTIDE SEQUENCE [MRNA]</scope>
    <scope>FUNCTION</scope>
    <scope>MUTAGENESIS OF 1-MET--ASN-68</scope>
    <scope>SUBCELLULAR LOCATION</scope>
    <scope>TISSUE SPECIFICITY</scope>
    <scope>DEVELOPMENTAL STAGE</scope>
    <source>
        <strain>cv. Col-3</strain>
    </source>
</reference>
<reference key="2">
    <citation type="journal article" date="1999" name="Nature">
        <title>Sequence and analysis of chromosome 4 of the plant Arabidopsis thaliana.</title>
        <authorList>
            <person name="Mayer K.F.X."/>
            <person name="Schueller C."/>
            <person name="Wambutt R."/>
            <person name="Murphy G."/>
            <person name="Volckaert G."/>
            <person name="Pohl T."/>
            <person name="Duesterhoeft A."/>
            <person name="Stiekema W."/>
            <person name="Entian K.-D."/>
            <person name="Terryn N."/>
            <person name="Harris B."/>
            <person name="Ansorge W."/>
            <person name="Brandt P."/>
            <person name="Grivell L.A."/>
            <person name="Rieger M."/>
            <person name="Weichselgartner M."/>
            <person name="de Simone V."/>
            <person name="Obermaier B."/>
            <person name="Mache R."/>
            <person name="Mueller M."/>
            <person name="Kreis M."/>
            <person name="Delseny M."/>
            <person name="Puigdomenech P."/>
            <person name="Watson M."/>
            <person name="Schmidtheini T."/>
            <person name="Reichert B."/>
            <person name="Portetelle D."/>
            <person name="Perez-Alonso M."/>
            <person name="Boutry M."/>
            <person name="Bancroft I."/>
            <person name="Vos P."/>
            <person name="Hoheisel J."/>
            <person name="Zimmermann W."/>
            <person name="Wedler H."/>
            <person name="Ridley P."/>
            <person name="Langham S.-A."/>
            <person name="McCullagh B."/>
            <person name="Bilham L."/>
            <person name="Robben J."/>
            <person name="van der Schueren J."/>
            <person name="Grymonprez B."/>
            <person name="Chuang Y.-J."/>
            <person name="Vandenbussche F."/>
            <person name="Braeken M."/>
            <person name="Weltjens I."/>
            <person name="Voet M."/>
            <person name="Bastiaens I."/>
            <person name="Aert R."/>
            <person name="Defoor E."/>
            <person name="Weitzenegger T."/>
            <person name="Bothe G."/>
            <person name="Ramsperger U."/>
            <person name="Hilbert H."/>
            <person name="Braun M."/>
            <person name="Holzer E."/>
            <person name="Brandt A."/>
            <person name="Peters S."/>
            <person name="van Staveren M."/>
            <person name="Dirkse W."/>
            <person name="Mooijman P."/>
            <person name="Klein Lankhorst R."/>
            <person name="Rose M."/>
            <person name="Hauf J."/>
            <person name="Koetter P."/>
            <person name="Berneiser S."/>
            <person name="Hempel S."/>
            <person name="Feldpausch M."/>
            <person name="Lamberth S."/>
            <person name="Van den Daele H."/>
            <person name="De Keyser A."/>
            <person name="Buysshaert C."/>
            <person name="Gielen J."/>
            <person name="Villarroel R."/>
            <person name="De Clercq R."/>
            <person name="van Montagu M."/>
            <person name="Rogers J."/>
            <person name="Cronin A."/>
            <person name="Quail M.A."/>
            <person name="Bray-Allen S."/>
            <person name="Clark L."/>
            <person name="Doggett J."/>
            <person name="Hall S."/>
            <person name="Kay M."/>
            <person name="Lennard N."/>
            <person name="McLay K."/>
            <person name="Mayes R."/>
            <person name="Pettett A."/>
            <person name="Rajandream M.A."/>
            <person name="Lyne M."/>
            <person name="Benes V."/>
            <person name="Rechmann S."/>
            <person name="Borkova D."/>
            <person name="Bloecker H."/>
            <person name="Scharfe M."/>
            <person name="Grimm M."/>
            <person name="Loehnert T.-H."/>
            <person name="Dose S."/>
            <person name="de Haan M."/>
            <person name="Maarse A.C."/>
            <person name="Schaefer M."/>
            <person name="Mueller-Auer S."/>
            <person name="Gabel C."/>
            <person name="Fuchs M."/>
            <person name="Fartmann B."/>
            <person name="Granderath K."/>
            <person name="Dauner D."/>
            <person name="Herzl A."/>
            <person name="Neumann S."/>
            <person name="Argiriou A."/>
            <person name="Vitale D."/>
            <person name="Liguori R."/>
            <person name="Piravandi E."/>
            <person name="Massenet O."/>
            <person name="Quigley F."/>
            <person name="Clabauld G."/>
            <person name="Muendlein A."/>
            <person name="Felber R."/>
            <person name="Schnabl S."/>
            <person name="Hiller R."/>
            <person name="Schmidt W."/>
            <person name="Lecharny A."/>
            <person name="Aubourg S."/>
            <person name="Chefdor F."/>
            <person name="Cooke R."/>
            <person name="Berger C."/>
            <person name="Monfort A."/>
            <person name="Casacuberta E."/>
            <person name="Gibbons T."/>
            <person name="Weber N."/>
            <person name="Vandenbol M."/>
            <person name="Bargues M."/>
            <person name="Terol J."/>
            <person name="Torres A."/>
            <person name="Perez-Perez A."/>
            <person name="Purnelle B."/>
            <person name="Bent E."/>
            <person name="Johnson S."/>
            <person name="Tacon D."/>
            <person name="Jesse T."/>
            <person name="Heijnen L."/>
            <person name="Schwarz S."/>
            <person name="Scholler P."/>
            <person name="Heber S."/>
            <person name="Francs P."/>
            <person name="Bielke C."/>
            <person name="Frishman D."/>
            <person name="Haase D."/>
            <person name="Lemcke K."/>
            <person name="Mewes H.-W."/>
            <person name="Stocker S."/>
            <person name="Zaccaria P."/>
            <person name="Bevan M."/>
            <person name="Wilson R.K."/>
            <person name="de la Bastide M."/>
            <person name="Habermann K."/>
            <person name="Parnell L."/>
            <person name="Dedhia N."/>
            <person name="Gnoj L."/>
            <person name="Schutz K."/>
            <person name="Huang E."/>
            <person name="Spiegel L."/>
            <person name="Sekhon M."/>
            <person name="Murray J."/>
            <person name="Sheet P."/>
            <person name="Cordes M."/>
            <person name="Abu-Threideh J."/>
            <person name="Stoneking T."/>
            <person name="Kalicki J."/>
            <person name="Graves T."/>
            <person name="Harmon G."/>
            <person name="Edwards J."/>
            <person name="Latreille P."/>
            <person name="Courtney L."/>
            <person name="Cloud J."/>
            <person name="Abbott A."/>
            <person name="Scott K."/>
            <person name="Johnson D."/>
            <person name="Minx P."/>
            <person name="Bentley D."/>
            <person name="Fulton B."/>
            <person name="Miller N."/>
            <person name="Greco T."/>
            <person name="Kemp K."/>
            <person name="Kramer J."/>
            <person name="Fulton L."/>
            <person name="Mardis E."/>
            <person name="Dante M."/>
            <person name="Pepin K."/>
            <person name="Hillier L.W."/>
            <person name="Nelson J."/>
            <person name="Spieth J."/>
            <person name="Ryan E."/>
            <person name="Andrews S."/>
            <person name="Geisel C."/>
            <person name="Layman D."/>
            <person name="Du H."/>
            <person name="Ali J."/>
            <person name="Berghoff A."/>
            <person name="Jones K."/>
            <person name="Drone K."/>
            <person name="Cotton M."/>
            <person name="Joshu C."/>
            <person name="Antonoiu B."/>
            <person name="Zidanic M."/>
            <person name="Strong C."/>
            <person name="Sun H."/>
            <person name="Lamar B."/>
            <person name="Yordan C."/>
            <person name="Ma P."/>
            <person name="Zhong J."/>
            <person name="Preston R."/>
            <person name="Vil D."/>
            <person name="Shekher M."/>
            <person name="Matero A."/>
            <person name="Shah R."/>
            <person name="Swaby I.K."/>
            <person name="O'Shaughnessy A."/>
            <person name="Rodriguez M."/>
            <person name="Hoffman J."/>
            <person name="Till S."/>
            <person name="Granat S."/>
            <person name="Shohdy N."/>
            <person name="Hasegawa A."/>
            <person name="Hameed A."/>
            <person name="Lodhi M."/>
            <person name="Johnson A."/>
            <person name="Chen E."/>
            <person name="Marra M.A."/>
            <person name="Martienssen R."/>
            <person name="McCombie W.R."/>
        </authorList>
    </citation>
    <scope>NUCLEOTIDE SEQUENCE [LARGE SCALE GENOMIC DNA]</scope>
    <source>
        <strain>cv. Columbia</strain>
    </source>
</reference>
<reference key="3">
    <citation type="journal article" date="2017" name="Plant J.">
        <title>Araport11: a complete reannotation of the Arabidopsis thaliana reference genome.</title>
        <authorList>
            <person name="Cheng C.Y."/>
            <person name="Krishnakumar V."/>
            <person name="Chan A.P."/>
            <person name="Thibaud-Nissen F."/>
            <person name="Schobel S."/>
            <person name="Town C.D."/>
        </authorList>
    </citation>
    <scope>GENOME REANNOTATION</scope>
    <source>
        <strain>cv. Columbia</strain>
    </source>
</reference>
<protein>
    <recommendedName>
        <fullName evidence="5">Protein ARV 2</fullName>
        <shortName evidence="5">AtArv2p</shortName>
    </recommendedName>
</protein>